<accession>P47702</accession>
<sequence length="385" mass="44207">MPIKLAQTNKEIKTTFNPFWSAAVVNEKNNWKNFKKFSAIFIKVIKVFIFIFLTIVGLWGCTQTLAQPWTGTNQVLGSGLEIGYKFGTTGDYRYDLISNNFGPYFTFSDYTLAYGPFYGWFVWPAAQIVLPIMYATRVPLGSGVELGFNMILSLIVLLLLVRLITIVITLNSTLALEKMNEVQGKLAEINAKYKGAIDLQSKRNRQLEIMSLYKKHNIKSSAAFVQVFVTLPIFLIIYRIVTTLRPIKAIILFNFWDLSKVPLTEIFSNFTTTGWPFIIFLVIVLPVQFLSQKLPQVWASKRNENAKAHSQKSIEQLNKTKKMQLIFYFVFAAITAFSAAGVGVYWFLNALFTLLQSYLTHVFIVKRREKRKQNYSKLDLILERE</sequence>
<evidence type="ECO:0000250" key="1"/>
<evidence type="ECO:0000255" key="2"/>
<evidence type="ECO:0000305" key="3"/>
<keyword id="KW-1003">Cell membrane</keyword>
<keyword id="KW-0143">Chaperone</keyword>
<keyword id="KW-0472">Membrane</keyword>
<keyword id="KW-0653">Protein transport</keyword>
<keyword id="KW-1185">Reference proteome</keyword>
<keyword id="KW-0812">Transmembrane</keyword>
<keyword id="KW-1133">Transmembrane helix</keyword>
<keyword id="KW-0813">Transport</keyword>
<dbReference type="EMBL" id="L43967">
    <property type="protein sequence ID" value="AAC72484.1"/>
    <property type="molecule type" value="Genomic_DNA"/>
</dbReference>
<dbReference type="PIR" id="C64251">
    <property type="entry name" value="C64251"/>
</dbReference>
<dbReference type="RefSeq" id="WP_009885569.1">
    <property type="nucleotide sequence ID" value="NC_000908.2"/>
</dbReference>
<dbReference type="FunCoup" id="P47702">
    <property type="interactions" value="162"/>
</dbReference>
<dbReference type="STRING" id="243273.MG_464"/>
<dbReference type="GeneID" id="88282645"/>
<dbReference type="KEGG" id="mge:MG_464"/>
<dbReference type="eggNOG" id="COG0706">
    <property type="taxonomic scope" value="Bacteria"/>
</dbReference>
<dbReference type="HOGENOM" id="CLU_058030_0_0_14"/>
<dbReference type="InParanoid" id="P47702"/>
<dbReference type="OrthoDB" id="394558at2"/>
<dbReference type="BioCyc" id="MGEN243273:G1GJ2-558-MONOMER"/>
<dbReference type="Proteomes" id="UP000000807">
    <property type="component" value="Chromosome"/>
</dbReference>
<dbReference type="GO" id="GO:0005886">
    <property type="term" value="C:plasma membrane"/>
    <property type="evidence" value="ECO:0000318"/>
    <property type="project" value="GO_Central"/>
</dbReference>
<dbReference type="GO" id="GO:0032977">
    <property type="term" value="F:membrane insertase activity"/>
    <property type="evidence" value="ECO:0000318"/>
    <property type="project" value="GO_Central"/>
</dbReference>
<dbReference type="GO" id="GO:0051205">
    <property type="term" value="P:protein insertion into membrane"/>
    <property type="evidence" value="ECO:0000318"/>
    <property type="project" value="GO_Central"/>
</dbReference>
<dbReference type="GO" id="GO:0015031">
    <property type="term" value="P:protein transport"/>
    <property type="evidence" value="ECO:0007669"/>
    <property type="project" value="UniProtKB-KW"/>
</dbReference>
<dbReference type="CDD" id="cd20070">
    <property type="entry name" value="5TM_YidC_Alb3"/>
    <property type="match status" value="1"/>
</dbReference>
<dbReference type="InterPro" id="IPR001708">
    <property type="entry name" value="YidC/ALB3/OXA1/COX18"/>
</dbReference>
<dbReference type="InterPro" id="IPR028055">
    <property type="entry name" value="YidC/Oxa/ALB_C"/>
</dbReference>
<dbReference type="InterPro" id="IPR047196">
    <property type="entry name" value="YidC_ALB_C"/>
</dbReference>
<dbReference type="NCBIfam" id="NF002566">
    <property type="entry name" value="PRK02201.1-1"/>
    <property type="match status" value="1"/>
</dbReference>
<dbReference type="NCBIfam" id="TIGR03592">
    <property type="entry name" value="yidC_oxa1_cterm"/>
    <property type="match status" value="1"/>
</dbReference>
<dbReference type="PANTHER" id="PTHR12428:SF65">
    <property type="entry name" value="CYTOCHROME C OXIDASE ASSEMBLY PROTEIN COX18, MITOCHONDRIAL"/>
    <property type="match status" value="1"/>
</dbReference>
<dbReference type="PANTHER" id="PTHR12428">
    <property type="entry name" value="OXA1"/>
    <property type="match status" value="1"/>
</dbReference>
<dbReference type="Pfam" id="PF02096">
    <property type="entry name" value="60KD_IMP"/>
    <property type="match status" value="1"/>
</dbReference>
<protein>
    <recommendedName>
        <fullName>Membrane protein insertase YidC</fullName>
    </recommendedName>
    <alternativeName>
        <fullName>Foldase YidC</fullName>
    </alternativeName>
    <alternativeName>
        <fullName>Membrane integrase YidC</fullName>
    </alternativeName>
    <alternativeName>
        <fullName>Membrane protein YidC</fullName>
    </alternativeName>
</protein>
<gene>
    <name type="primary">yidC</name>
    <name type="ordered locus">MG464</name>
</gene>
<organism>
    <name type="scientific">Mycoplasma genitalium (strain ATCC 33530 / DSM 19775 / NCTC 10195 / G37)</name>
    <name type="common">Mycoplasmoides genitalium</name>
    <dbReference type="NCBI Taxonomy" id="243273"/>
    <lineage>
        <taxon>Bacteria</taxon>
        <taxon>Bacillati</taxon>
        <taxon>Mycoplasmatota</taxon>
        <taxon>Mycoplasmoidales</taxon>
        <taxon>Mycoplasmoidaceae</taxon>
        <taxon>Mycoplasmoides</taxon>
    </lineage>
</organism>
<feature type="chain" id="PRO_0000124724" description="Membrane protein insertase YidC">
    <location>
        <begin position="1"/>
        <end position="385"/>
    </location>
</feature>
<feature type="transmembrane region" description="Helical" evidence="2">
    <location>
        <begin position="39"/>
        <end position="59"/>
    </location>
</feature>
<feature type="transmembrane region" description="Helical" evidence="2">
    <location>
        <begin position="112"/>
        <end position="132"/>
    </location>
</feature>
<feature type="transmembrane region" description="Helical" evidence="2">
    <location>
        <begin position="150"/>
        <end position="170"/>
    </location>
</feature>
<feature type="transmembrane region" description="Helical" evidence="2">
    <location>
        <begin position="222"/>
        <end position="242"/>
    </location>
</feature>
<feature type="transmembrane region" description="Helical" evidence="2">
    <location>
        <begin position="247"/>
        <end position="267"/>
    </location>
</feature>
<feature type="transmembrane region" description="Helical" evidence="2">
    <location>
        <begin position="270"/>
        <end position="290"/>
    </location>
</feature>
<feature type="transmembrane region" description="Helical" evidence="2">
    <location>
        <begin position="325"/>
        <end position="345"/>
    </location>
</feature>
<name>YIDC_MYCGE</name>
<reference key="1">
    <citation type="journal article" date="1995" name="Science">
        <title>The minimal gene complement of Mycoplasma genitalium.</title>
        <authorList>
            <person name="Fraser C.M."/>
            <person name="Gocayne J.D."/>
            <person name="White O."/>
            <person name="Adams M.D."/>
            <person name="Clayton R.A."/>
            <person name="Fleischmann R.D."/>
            <person name="Bult C.J."/>
            <person name="Kerlavage A.R."/>
            <person name="Sutton G.G."/>
            <person name="Kelley J.M."/>
            <person name="Fritchman J.L."/>
            <person name="Weidman J.F."/>
            <person name="Small K.V."/>
            <person name="Sandusky M."/>
            <person name="Fuhrmann J.L."/>
            <person name="Nguyen D.T."/>
            <person name="Utterback T.R."/>
            <person name="Saudek D.M."/>
            <person name="Phillips C.A."/>
            <person name="Merrick J.M."/>
            <person name="Tomb J.-F."/>
            <person name="Dougherty B.A."/>
            <person name="Bott K.F."/>
            <person name="Hu P.-C."/>
            <person name="Lucier T.S."/>
            <person name="Peterson S.N."/>
            <person name="Smith H.O."/>
            <person name="Hutchison C.A. III"/>
            <person name="Venter J.C."/>
        </authorList>
    </citation>
    <scope>NUCLEOTIDE SEQUENCE [LARGE SCALE GENOMIC DNA]</scope>
    <source>
        <strain>ATCC 33530 / DSM 19775 / NCTC 10195 / G37</strain>
    </source>
</reference>
<comment type="function">
    <text evidence="1">Required for the insertion and/or proper folding and/or complex formation of integral membrane proteins into the membrane. Involved in integration of membrane proteins that insert both dependently and independently of the Sec translocase complex, as well as at least some lipoproteins. Aids folding of multispanning membrane proteins (By similarity).</text>
</comment>
<comment type="subunit">
    <text evidence="1">Interacts with the Sec translocase complex via SecD. Specifically interacts with transmembrane segments of nascent integral membrane proteins during membrane integration (By similarity).</text>
</comment>
<comment type="subcellular location">
    <subcellularLocation>
        <location evidence="1">Cell membrane</location>
        <topology evidence="1">Multi-pass membrane protein</topology>
    </subcellularLocation>
</comment>
<comment type="similarity">
    <text evidence="3">Belongs to the OXA1/ALB3/YidC family. Type 1 subfamily.</text>
</comment>
<proteinExistence type="inferred from homology"/>